<reference key="1">
    <citation type="journal article" date="2002" name="Proc. Natl. Acad. Sci. U.S.A.">
        <title>The complete genome of hyperthermophile Methanopyrus kandleri AV19 and monophyly of archaeal methanogens.</title>
        <authorList>
            <person name="Slesarev A.I."/>
            <person name="Mezhevaya K.V."/>
            <person name="Makarova K.S."/>
            <person name="Polushin N.N."/>
            <person name="Shcherbinina O.V."/>
            <person name="Shakhova V.V."/>
            <person name="Belova G.I."/>
            <person name="Aravind L."/>
            <person name="Natale D.A."/>
            <person name="Rogozin I.B."/>
            <person name="Tatusov R.L."/>
            <person name="Wolf Y.I."/>
            <person name="Stetter K.O."/>
            <person name="Malykh A.G."/>
            <person name="Koonin E.V."/>
            <person name="Kozyavkin S.A."/>
        </authorList>
    </citation>
    <scope>NUCLEOTIDE SEQUENCE [LARGE SCALE GENOMIC DNA]</scope>
    <source>
        <strain>AV19 / DSM 6324 / JCM 9639 / NBRC 100938</strain>
    </source>
</reference>
<sequence length="269" mass="28622">MREIELWTAVLAGVVQGITEWLPISSEGQATMTMMKVLGIPPSTAMDLALWLHAGTLLAVLLRFGVPYWLTVRDLLMGGPWRRLGLFAIVATVCTAVVGLPVYKVLKGIFSAATGDAVQMAIGGALIVTGLLLRISPEGLRDRREVNVVDAVIVGLGQGFSVIPGISRSGTTMALLLWRRFDGGEAVWLSFYLAGPAMLGATALELKEGLSAATKMGTSWMVTAIGVSFVVSLICMEVLLRVARRLDFSKVCLLLGGIALLVPLAAKML</sequence>
<feature type="chain" id="PRO_0000151250" description="Undecaprenyl-diphosphatase">
    <location>
        <begin position="1"/>
        <end position="269"/>
    </location>
</feature>
<feature type="transmembrane region" description="Helical" evidence="1">
    <location>
        <begin position="4"/>
        <end position="24"/>
    </location>
</feature>
<feature type="transmembrane region" description="Helical" evidence="1">
    <location>
        <begin position="50"/>
        <end position="70"/>
    </location>
</feature>
<feature type="transmembrane region" description="Helical" evidence="1">
    <location>
        <begin position="86"/>
        <end position="106"/>
    </location>
</feature>
<feature type="transmembrane region" description="Helical" evidence="1">
    <location>
        <begin position="113"/>
        <end position="133"/>
    </location>
</feature>
<feature type="transmembrane region" description="Helical" evidence="1">
    <location>
        <begin position="146"/>
        <end position="166"/>
    </location>
</feature>
<feature type="transmembrane region" description="Helical" evidence="1">
    <location>
        <begin position="186"/>
        <end position="206"/>
    </location>
</feature>
<feature type="transmembrane region" description="Helical" evidence="1">
    <location>
        <begin position="220"/>
        <end position="240"/>
    </location>
</feature>
<feature type="transmembrane region" description="Helical" evidence="1">
    <location>
        <begin position="246"/>
        <end position="266"/>
    </location>
</feature>
<name>UPPP_METKA</name>
<accession>Q8TW25</accession>
<protein>
    <recommendedName>
        <fullName evidence="1">Undecaprenyl-diphosphatase</fullName>
        <ecNumber evidence="1">3.6.1.27</ecNumber>
    </recommendedName>
    <alternativeName>
        <fullName evidence="1">Undecaprenyl pyrophosphate phosphatase</fullName>
    </alternativeName>
</protein>
<comment type="function">
    <text evidence="1">Catalyzes the dephosphorylation of undecaprenyl diphosphate (UPP).</text>
</comment>
<comment type="catalytic activity">
    <reaction evidence="1">
        <text>di-trans,octa-cis-undecaprenyl diphosphate + H2O = di-trans,octa-cis-undecaprenyl phosphate + phosphate + H(+)</text>
        <dbReference type="Rhea" id="RHEA:28094"/>
        <dbReference type="ChEBI" id="CHEBI:15377"/>
        <dbReference type="ChEBI" id="CHEBI:15378"/>
        <dbReference type="ChEBI" id="CHEBI:43474"/>
        <dbReference type="ChEBI" id="CHEBI:58405"/>
        <dbReference type="ChEBI" id="CHEBI:60392"/>
        <dbReference type="EC" id="3.6.1.27"/>
    </reaction>
</comment>
<comment type="subcellular location">
    <subcellularLocation>
        <location evidence="1">Cell membrane</location>
        <topology evidence="1">Multi-pass membrane protein</topology>
    </subcellularLocation>
</comment>
<comment type="similarity">
    <text evidence="1">Belongs to the UppP family.</text>
</comment>
<proteinExistence type="inferred from homology"/>
<evidence type="ECO:0000255" key="1">
    <source>
        <dbReference type="HAMAP-Rule" id="MF_01006"/>
    </source>
</evidence>
<dbReference type="EC" id="3.6.1.27" evidence="1"/>
<dbReference type="EMBL" id="AE009439">
    <property type="protein sequence ID" value="AAM02425.1"/>
    <property type="molecule type" value="Genomic_DNA"/>
</dbReference>
<dbReference type="RefSeq" id="WP_011019580.1">
    <property type="nucleotide sequence ID" value="NC_003551.1"/>
</dbReference>
<dbReference type="SMR" id="Q8TW25"/>
<dbReference type="STRING" id="190192.MK1212"/>
<dbReference type="PaxDb" id="190192-MK1212"/>
<dbReference type="EnsemblBacteria" id="AAM02425">
    <property type="protein sequence ID" value="AAM02425"/>
    <property type="gene ID" value="MK1212"/>
</dbReference>
<dbReference type="GeneID" id="1477807"/>
<dbReference type="KEGG" id="mka:MK1212"/>
<dbReference type="PATRIC" id="fig|190192.8.peg.1314"/>
<dbReference type="HOGENOM" id="CLU_060296_1_2_2"/>
<dbReference type="InParanoid" id="Q8TW25"/>
<dbReference type="OrthoDB" id="65864at2157"/>
<dbReference type="Proteomes" id="UP000001826">
    <property type="component" value="Chromosome"/>
</dbReference>
<dbReference type="GO" id="GO:0005886">
    <property type="term" value="C:plasma membrane"/>
    <property type="evidence" value="ECO:0007669"/>
    <property type="project" value="UniProtKB-SubCell"/>
</dbReference>
<dbReference type="GO" id="GO:0050380">
    <property type="term" value="F:undecaprenyl-diphosphatase activity"/>
    <property type="evidence" value="ECO:0007669"/>
    <property type="project" value="UniProtKB-UniRule"/>
</dbReference>
<dbReference type="HAMAP" id="MF_01006">
    <property type="entry name" value="Undec_diphosphatase"/>
    <property type="match status" value="1"/>
</dbReference>
<dbReference type="InterPro" id="IPR003824">
    <property type="entry name" value="UppP"/>
</dbReference>
<dbReference type="PANTHER" id="PTHR30622">
    <property type="entry name" value="UNDECAPRENYL-DIPHOSPHATASE"/>
    <property type="match status" value="1"/>
</dbReference>
<dbReference type="PANTHER" id="PTHR30622:SF2">
    <property type="entry name" value="UNDECAPRENYL-DIPHOSPHATASE"/>
    <property type="match status" value="1"/>
</dbReference>
<dbReference type="Pfam" id="PF02673">
    <property type="entry name" value="BacA"/>
    <property type="match status" value="1"/>
</dbReference>
<gene>
    <name evidence="1" type="primary">uppP</name>
    <name type="synonym">bacA</name>
    <name type="synonym">upk</name>
    <name type="ordered locus">MK1212</name>
</gene>
<organism>
    <name type="scientific">Methanopyrus kandleri (strain AV19 / DSM 6324 / JCM 9639 / NBRC 100938)</name>
    <dbReference type="NCBI Taxonomy" id="190192"/>
    <lineage>
        <taxon>Archaea</taxon>
        <taxon>Methanobacteriati</taxon>
        <taxon>Methanobacteriota</taxon>
        <taxon>Methanomada group</taxon>
        <taxon>Methanopyri</taxon>
        <taxon>Methanopyrales</taxon>
        <taxon>Methanopyraceae</taxon>
        <taxon>Methanopyrus</taxon>
    </lineage>
</organism>
<keyword id="KW-1003">Cell membrane</keyword>
<keyword id="KW-0378">Hydrolase</keyword>
<keyword id="KW-0472">Membrane</keyword>
<keyword id="KW-1185">Reference proteome</keyword>
<keyword id="KW-0812">Transmembrane</keyword>
<keyword id="KW-1133">Transmembrane helix</keyword>